<proteinExistence type="inferred from homology"/>
<feature type="chain" id="PRO_0000403574" description="Flap endonuclease 1">
    <location>
        <begin position="1"/>
        <end position="453"/>
    </location>
</feature>
<feature type="region of interest" description="N-domain">
    <location>
        <begin position="1"/>
        <end position="105"/>
    </location>
</feature>
<feature type="region of interest" description="I-domain">
    <location>
        <begin position="123"/>
        <end position="254"/>
    </location>
</feature>
<feature type="region of interest" description="Disordered" evidence="2">
    <location>
        <begin position="273"/>
        <end position="336"/>
    </location>
</feature>
<feature type="region of interest" description="Interaction with PCNA" evidence="1">
    <location>
        <begin position="406"/>
        <end position="414"/>
    </location>
</feature>
<feature type="region of interest" description="Disordered" evidence="2">
    <location>
        <begin position="409"/>
        <end position="453"/>
    </location>
</feature>
<feature type="compositionally biased region" description="Basic residues" evidence="2">
    <location>
        <begin position="320"/>
        <end position="333"/>
    </location>
</feature>
<feature type="compositionally biased region" description="Basic and acidic residues" evidence="2">
    <location>
        <begin position="417"/>
        <end position="446"/>
    </location>
</feature>
<feature type="binding site" evidence="1">
    <location>
        <position position="34"/>
    </location>
    <ligand>
        <name>Mg(2+)</name>
        <dbReference type="ChEBI" id="CHEBI:18420"/>
        <label>1</label>
    </ligand>
</feature>
<feature type="binding site" evidence="1">
    <location>
        <position position="47"/>
    </location>
    <ligand>
        <name>DNA</name>
        <dbReference type="ChEBI" id="CHEBI:16991"/>
    </ligand>
</feature>
<feature type="binding site" evidence="1">
    <location>
        <position position="71"/>
    </location>
    <ligand>
        <name>DNA</name>
        <dbReference type="ChEBI" id="CHEBI:16991"/>
    </ligand>
</feature>
<feature type="binding site" evidence="1">
    <location>
        <position position="87"/>
    </location>
    <ligand>
        <name>Mg(2+)</name>
        <dbReference type="ChEBI" id="CHEBI:18420"/>
        <label>1</label>
    </ligand>
</feature>
<feature type="binding site" evidence="1">
    <location>
        <position position="159"/>
    </location>
    <ligand>
        <name>DNA</name>
        <dbReference type="ChEBI" id="CHEBI:16991"/>
    </ligand>
</feature>
<feature type="binding site" evidence="1">
    <location>
        <position position="159"/>
    </location>
    <ligand>
        <name>Mg(2+)</name>
        <dbReference type="ChEBI" id="CHEBI:18420"/>
        <label>1</label>
    </ligand>
</feature>
<feature type="binding site" evidence="1">
    <location>
        <position position="161"/>
    </location>
    <ligand>
        <name>Mg(2+)</name>
        <dbReference type="ChEBI" id="CHEBI:18420"/>
        <label>1</label>
    </ligand>
</feature>
<feature type="binding site" evidence="1">
    <location>
        <position position="180"/>
    </location>
    <ligand>
        <name>Mg(2+)</name>
        <dbReference type="ChEBI" id="CHEBI:18420"/>
        <label>2</label>
    </ligand>
</feature>
<feature type="binding site" evidence="1">
    <location>
        <position position="182"/>
    </location>
    <ligand>
        <name>Mg(2+)</name>
        <dbReference type="ChEBI" id="CHEBI:18420"/>
        <label>2</label>
    </ligand>
</feature>
<feature type="binding site" evidence="1">
    <location>
        <position position="232"/>
    </location>
    <ligand>
        <name>DNA</name>
        <dbReference type="ChEBI" id="CHEBI:16991"/>
    </ligand>
</feature>
<feature type="binding site" evidence="1">
    <location>
        <position position="234"/>
    </location>
    <ligand>
        <name>DNA</name>
        <dbReference type="ChEBI" id="CHEBI:16991"/>
    </ligand>
</feature>
<feature type="binding site" evidence="1">
    <location>
        <position position="234"/>
    </location>
    <ligand>
        <name>Mg(2+)</name>
        <dbReference type="ChEBI" id="CHEBI:18420"/>
        <label>2</label>
    </ligand>
</feature>
<gene>
    <name evidence="1" type="primary">FEN1</name>
    <name type="ordered locus">CND01190</name>
</gene>
<sequence length="453" mass="50154">MGIKGLTGLLSENAPKCMKDHEMKTLFGRKVAIDASMSIYQFLIAVRQQDGQMLMNESGDVTSHLMGFFYRTIRMVDHGIKPCYIFDGKPPELKGSVLAKRFARREEAKEGEEEAKETGTAEDVDKLARRQVRVTREHNEECKKLLSLMGIPVVTAPGEAEAQCAELARAGKVYAAGSEDMDTLTFNSPILLRHLTFSEAKKMPISEIHLDVALRDLEMSMDQFIELCILLGCDYLEPCKGIGPKTALKLMREHGTLGKVVEHIRGKMAEKAEEIKAAADEEAEAEAEAEKYDSDPESEEGGETMINSDGEEVPAPSKLKSPKKKAPAKKKKVASSGMQIPEFWPWEEAKQLFMKPDVVNGDDLVLEWKQPDTEGLVEFLCRDKGFNEDRVRAGAAKLSKMLAAKQQGRLDGFFTVKPKEPAAKDTGKGKGKATKGEKRKAEEKGSAKKKSKN</sequence>
<keyword id="KW-0227">DNA damage</keyword>
<keyword id="KW-0234">DNA repair</keyword>
<keyword id="KW-0235">DNA replication</keyword>
<keyword id="KW-0255">Endonuclease</keyword>
<keyword id="KW-0269">Exonuclease</keyword>
<keyword id="KW-0378">Hydrolase</keyword>
<keyword id="KW-0460">Magnesium</keyword>
<keyword id="KW-0479">Metal-binding</keyword>
<keyword id="KW-0496">Mitochondrion</keyword>
<keyword id="KW-0540">Nuclease</keyword>
<keyword id="KW-0539">Nucleus</keyword>
<keyword id="KW-0597">Phosphoprotein</keyword>
<keyword id="KW-1185">Reference proteome</keyword>
<dbReference type="EC" id="3.1.-.-" evidence="1"/>
<dbReference type="EMBL" id="AE017344">
    <property type="protein sequence ID" value="AAW43099.1"/>
    <property type="molecule type" value="Genomic_DNA"/>
</dbReference>
<dbReference type="RefSeq" id="XP_570406.1">
    <property type="nucleotide sequence ID" value="XM_570406.1"/>
</dbReference>
<dbReference type="SMR" id="P0CS60"/>
<dbReference type="FunCoup" id="P0CS60">
    <property type="interactions" value="751"/>
</dbReference>
<dbReference type="STRING" id="214684.P0CS60"/>
<dbReference type="PaxDb" id="214684-P0CS60"/>
<dbReference type="EnsemblFungi" id="AAW43099">
    <property type="protein sequence ID" value="AAW43099"/>
    <property type="gene ID" value="CND01190"/>
</dbReference>
<dbReference type="GeneID" id="3257380"/>
<dbReference type="KEGG" id="cne:CND01190"/>
<dbReference type="VEuPathDB" id="FungiDB:CND01190"/>
<dbReference type="eggNOG" id="KOG2519">
    <property type="taxonomic scope" value="Eukaryota"/>
</dbReference>
<dbReference type="HOGENOM" id="CLU_032444_1_1_1"/>
<dbReference type="InParanoid" id="P0CS60"/>
<dbReference type="OMA" id="IQEVHID"/>
<dbReference type="OrthoDB" id="1937206at2759"/>
<dbReference type="Proteomes" id="UP000002149">
    <property type="component" value="Chromosome 4"/>
</dbReference>
<dbReference type="GO" id="GO:0005737">
    <property type="term" value="C:cytoplasm"/>
    <property type="evidence" value="ECO:0000318"/>
    <property type="project" value="GO_Central"/>
</dbReference>
<dbReference type="GO" id="GO:0005829">
    <property type="term" value="C:cytosol"/>
    <property type="evidence" value="ECO:0007669"/>
    <property type="project" value="EnsemblFungi"/>
</dbReference>
<dbReference type="GO" id="GO:0005739">
    <property type="term" value="C:mitochondrion"/>
    <property type="evidence" value="ECO:0007669"/>
    <property type="project" value="UniProtKB-SubCell"/>
</dbReference>
<dbReference type="GO" id="GO:0005730">
    <property type="term" value="C:nucleolus"/>
    <property type="evidence" value="ECO:0007669"/>
    <property type="project" value="UniProtKB-SubCell"/>
</dbReference>
<dbReference type="GO" id="GO:0005654">
    <property type="term" value="C:nucleoplasm"/>
    <property type="evidence" value="ECO:0007669"/>
    <property type="project" value="UniProtKB-SubCell"/>
</dbReference>
<dbReference type="GO" id="GO:0005634">
    <property type="term" value="C:nucleus"/>
    <property type="evidence" value="ECO:0000318"/>
    <property type="project" value="GO_Central"/>
</dbReference>
<dbReference type="GO" id="GO:0008409">
    <property type="term" value="F:5'-3' exonuclease activity"/>
    <property type="evidence" value="ECO:0000318"/>
    <property type="project" value="GO_Central"/>
</dbReference>
<dbReference type="GO" id="GO:0017108">
    <property type="term" value="F:5'-flap endonuclease activity"/>
    <property type="evidence" value="ECO:0000318"/>
    <property type="project" value="GO_Central"/>
</dbReference>
<dbReference type="GO" id="GO:0003677">
    <property type="term" value="F:DNA binding"/>
    <property type="evidence" value="ECO:0007669"/>
    <property type="project" value="UniProtKB-UniRule"/>
</dbReference>
<dbReference type="GO" id="GO:0000287">
    <property type="term" value="F:magnesium ion binding"/>
    <property type="evidence" value="ECO:0007669"/>
    <property type="project" value="UniProtKB-UniRule"/>
</dbReference>
<dbReference type="GO" id="GO:0006284">
    <property type="term" value="P:base-excision repair"/>
    <property type="evidence" value="ECO:0007669"/>
    <property type="project" value="UniProtKB-UniRule"/>
</dbReference>
<dbReference type="GO" id="GO:0043137">
    <property type="term" value="P:DNA replication, removal of RNA primer"/>
    <property type="evidence" value="ECO:0007669"/>
    <property type="project" value="UniProtKB-UniRule"/>
</dbReference>
<dbReference type="GO" id="GO:0006303">
    <property type="term" value="P:double-strand break repair via nonhomologous end joining"/>
    <property type="evidence" value="ECO:0007669"/>
    <property type="project" value="EnsemblFungi"/>
</dbReference>
<dbReference type="GO" id="GO:0007534">
    <property type="term" value="P:gene conversion at mating-type locus"/>
    <property type="evidence" value="ECO:0007669"/>
    <property type="project" value="EnsemblFungi"/>
</dbReference>
<dbReference type="GO" id="GO:0035753">
    <property type="term" value="P:maintenance of DNA trinucleotide repeats"/>
    <property type="evidence" value="ECO:0007669"/>
    <property type="project" value="EnsemblFungi"/>
</dbReference>
<dbReference type="CDD" id="cd09907">
    <property type="entry name" value="H3TH_FEN1-Euk"/>
    <property type="match status" value="1"/>
</dbReference>
<dbReference type="CDD" id="cd09867">
    <property type="entry name" value="PIN_FEN1"/>
    <property type="match status" value="1"/>
</dbReference>
<dbReference type="FunFam" id="1.10.150.20:FF:000071">
    <property type="entry name" value="Flap endonuclease 1"/>
    <property type="match status" value="1"/>
</dbReference>
<dbReference type="FunFam" id="3.40.50.1010:FF:000003">
    <property type="entry name" value="Flap endonuclease 1"/>
    <property type="match status" value="1"/>
</dbReference>
<dbReference type="Gene3D" id="1.10.150.20">
    <property type="entry name" value="5' to 3' exonuclease, C-terminal subdomain"/>
    <property type="match status" value="1"/>
</dbReference>
<dbReference type="Gene3D" id="3.40.50.1010">
    <property type="entry name" value="5'-nuclease"/>
    <property type="match status" value="1"/>
</dbReference>
<dbReference type="HAMAP" id="MF_00614">
    <property type="entry name" value="Fen"/>
    <property type="match status" value="1"/>
</dbReference>
<dbReference type="InterPro" id="IPR036279">
    <property type="entry name" value="5-3_exonuclease_C_sf"/>
</dbReference>
<dbReference type="InterPro" id="IPR023426">
    <property type="entry name" value="Flap_endonuc"/>
</dbReference>
<dbReference type="InterPro" id="IPR008918">
    <property type="entry name" value="HhH2"/>
</dbReference>
<dbReference type="InterPro" id="IPR029060">
    <property type="entry name" value="PIN-like_dom_sf"/>
</dbReference>
<dbReference type="InterPro" id="IPR006086">
    <property type="entry name" value="XPG-I_dom"/>
</dbReference>
<dbReference type="InterPro" id="IPR006084">
    <property type="entry name" value="XPG/Rad2"/>
</dbReference>
<dbReference type="InterPro" id="IPR019974">
    <property type="entry name" value="XPG_CS"/>
</dbReference>
<dbReference type="InterPro" id="IPR006085">
    <property type="entry name" value="XPG_DNA_repair_N"/>
</dbReference>
<dbReference type="PANTHER" id="PTHR11081:SF9">
    <property type="entry name" value="FLAP ENDONUCLEASE 1"/>
    <property type="match status" value="1"/>
</dbReference>
<dbReference type="PANTHER" id="PTHR11081">
    <property type="entry name" value="FLAP ENDONUCLEASE FAMILY MEMBER"/>
    <property type="match status" value="1"/>
</dbReference>
<dbReference type="Pfam" id="PF00867">
    <property type="entry name" value="XPG_I"/>
    <property type="match status" value="1"/>
</dbReference>
<dbReference type="Pfam" id="PF00752">
    <property type="entry name" value="XPG_N"/>
    <property type="match status" value="1"/>
</dbReference>
<dbReference type="PRINTS" id="PR00853">
    <property type="entry name" value="XPGRADSUPER"/>
</dbReference>
<dbReference type="SMART" id="SM00279">
    <property type="entry name" value="HhH2"/>
    <property type="match status" value="1"/>
</dbReference>
<dbReference type="SMART" id="SM00484">
    <property type="entry name" value="XPGI"/>
    <property type="match status" value="1"/>
</dbReference>
<dbReference type="SMART" id="SM00485">
    <property type="entry name" value="XPGN"/>
    <property type="match status" value="1"/>
</dbReference>
<dbReference type="SUPFAM" id="SSF47807">
    <property type="entry name" value="5' to 3' exonuclease, C-terminal subdomain"/>
    <property type="match status" value="1"/>
</dbReference>
<dbReference type="SUPFAM" id="SSF88723">
    <property type="entry name" value="PIN domain-like"/>
    <property type="match status" value="1"/>
</dbReference>
<dbReference type="PROSITE" id="PS00841">
    <property type="entry name" value="XPG_1"/>
    <property type="match status" value="1"/>
</dbReference>
<dbReference type="PROSITE" id="PS00842">
    <property type="entry name" value="XPG_2"/>
    <property type="match status" value="1"/>
</dbReference>
<name>FEN1_CRYNJ</name>
<accession>P0CS60</accession>
<accession>Q55TE2</accession>
<accession>Q5KIZ6</accession>
<evidence type="ECO:0000255" key="1">
    <source>
        <dbReference type="HAMAP-Rule" id="MF_03140"/>
    </source>
</evidence>
<evidence type="ECO:0000256" key="2">
    <source>
        <dbReference type="SAM" id="MobiDB-lite"/>
    </source>
</evidence>
<comment type="function">
    <text evidence="1">Structure-specific nuclease with 5'-flap endonuclease and 5'-3' exonuclease activities involved in DNA replication and repair. During DNA replication, cleaves the 5'-overhanging flap structure that is generated by displacement synthesis when DNA polymerase encounters the 5'-end of a downstream Okazaki fragment. It enters the flap from the 5'-end and then tracks to cleave the flap base, leaving a nick for ligation. Also involved in the long patch base excision repair (LP-BER) pathway, by cleaving within the apurinic/apyrimidinic (AP) site-terminated flap. Acts as a genome stabilization factor that prevents flaps from equilibrating into structures that lead to duplications and deletions. Also possesses 5'-3' exonuclease activity on nicked or gapped double-stranded DNA, and exhibits RNase H activity. Also involved in replication and repair of rDNA and in repairing mitochondrial DNA.</text>
</comment>
<comment type="cofactor">
    <cofactor evidence="1">
        <name>Mg(2+)</name>
        <dbReference type="ChEBI" id="CHEBI:18420"/>
    </cofactor>
    <text evidence="1">Binds 2 magnesium ions per subunit. They probably participate in the reaction catalyzed by the enzyme. May bind an additional third magnesium ion after substrate binding.</text>
</comment>
<comment type="subunit">
    <text evidence="1">Interacts with PCNA. Three molecules of FEN1 bind to one PCNA trimer with each molecule binding to one PCNA monomer. PCNA stimulates the nuclease activity without altering cleavage specificity.</text>
</comment>
<comment type="subcellular location">
    <subcellularLocation>
        <location evidence="1">Nucleus</location>
        <location evidence="1">Nucleolus</location>
    </subcellularLocation>
    <subcellularLocation>
        <location evidence="1">Nucleus</location>
        <location evidence="1">Nucleoplasm</location>
    </subcellularLocation>
    <subcellularLocation>
        <location evidence="1">Mitochondrion</location>
    </subcellularLocation>
    <text evidence="1">Resides mostly in the nucleoli and relocalizes to the nucleoplasm upon DNA damage.</text>
</comment>
<comment type="PTM">
    <text evidence="1">Phosphorylated. Phosphorylation upon DNA damage induces relocalization to the nuclear plasma.</text>
</comment>
<comment type="similarity">
    <text evidence="1">Belongs to the XPG/RAD2 endonuclease family. FEN1 subfamily.</text>
</comment>
<protein>
    <recommendedName>
        <fullName evidence="1">Flap endonuclease 1</fullName>
        <shortName evidence="1">FEN-1</shortName>
        <ecNumber evidence="1">3.1.-.-</ecNumber>
    </recommendedName>
    <alternativeName>
        <fullName evidence="1">Flap structure-specific endonuclease 1</fullName>
    </alternativeName>
</protein>
<organism>
    <name type="scientific">Cryptococcus neoformans var. neoformans serotype D (strain JEC21 / ATCC MYA-565)</name>
    <name type="common">Filobasidiella neoformans</name>
    <dbReference type="NCBI Taxonomy" id="214684"/>
    <lineage>
        <taxon>Eukaryota</taxon>
        <taxon>Fungi</taxon>
        <taxon>Dikarya</taxon>
        <taxon>Basidiomycota</taxon>
        <taxon>Agaricomycotina</taxon>
        <taxon>Tremellomycetes</taxon>
        <taxon>Tremellales</taxon>
        <taxon>Cryptococcaceae</taxon>
        <taxon>Cryptococcus</taxon>
        <taxon>Cryptococcus neoformans species complex</taxon>
    </lineage>
</organism>
<reference key="1">
    <citation type="journal article" date="2005" name="Science">
        <title>The genome of the basidiomycetous yeast and human pathogen Cryptococcus neoformans.</title>
        <authorList>
            <person name="Loftus B.J."/>
            <person name="Fung E."/>
            <person name="Roncaglia P."/>
            <person name="Rowley D."/>
            <person name="Amedeo P."/>
            <person name="Bruno D."/>
            <person name="Vamathevan J."/>
            <person name="Miranda M."/>
            <person name="Anderson I.J."/>
            <person name="Fraser J.A."/>
            <person name="Allen J.E."/>
            <person name="Bosdet I.E."/>
            <person name="Brent M.R."/>
            <person name="Chiu R."/>
            <person name="Doering T.L."/>
            <person name="Donlin M.J."/>
            <person name="D'Souza C.A."/>
            <person name="Fox D.S."/>
            <person name="Grinberg V."/>
            <person name="Fu J."/>
            <person name="Fukushima M."/>
            <person name="Haas B.J."/>
            <person name="Huang J.C."/>
            <person name="Janbon G."/>
            <person name="Jones S.J.M."/>
            <person name="Koo H.L."/>
            <person name="Krzywinski M.I."/>
            <person name="Kwon-Chung K.J."/>
            <person name="Lengeler K.B."/>
            <person name="Maiti R."/>
            <person name="Marra M.A."/>
            <person name="Marra R.E."/>
            <person name="Mathewson C.A."/>
            <person name="Mitchell T.G."/>
            <person name="Pertea M."/>
            <person name="Riggs F.R."/>
            <person name="Salzberg S.L."/>
            <person name="Schein J.E."/>
            <person name="Shvartsbeyn A."/>
            <person name="Shin H."/>
            <person name="Shumway M."/>
            <person name="Specht C.A."/>
            <person name="Suh B.B."/>
            <person name="Tenney A."/>
            <person name="Utterback T.R."/>
            <person name="Wickes B.L."/>
            <person name="Wortman J.R."/>
            <person name="Wye N.H."/>
            <person name="Kronstad J.W."/>
            <person name="Lodge J.K."/>
            <person name="Heitman J."/>
            <person name="Davis R.W."/>
            <person name="Fraser C.M."/>
            <person name="Hyman R.W."/>
        </authorList>
    </citation>
    <scope>NUCLEOTIDE SEQUENCE [LARGE SCALE GENOMIC DNA]</scope>
    <source>
        <strain>JEC21 / ATCC MYA-565</strain>
    </source>
</reference>